<reference key="1">
    <citation type="journal article" date="2001" name="Nature">
        <title>Genome sequence of Yersinia pestis, the causative agent of plague.</title>
        <authorList>
            <person name="Parkhill J."/>
            <person name="Wren B.W."/>
            <person name="Thomson N.R."/>
            <person name="Titball R.W."/>
            <person name="Holden M.T.G."/>
            <person name="Prentice M.B."/>
            <person name="Sebaihia M."/>
            <person name="James K.D."/>
            <person name="Churcher C.M."/>
            <person name="Mungall K.L."/>
            <person name="Baker S."/>
            <person name="Basham D."/>
            <person name="Bentley S.D."/>
            <person name="Brooks K."/>
            <person name="Cerdeno-Tarraga A.-M."/>
            <person name="Chillingworth T."/>
            <person name="Cronin A."/>
            <person name="Davies R.M."/>
            <person name="Davis P."/>
            <person name="Dougan G."/>
            <person name="Feltwell T."/>
            <person name="Hamlin N."/>
            <person name="Holroyd S."/>
            <person name="Jagels K."/>
            <person name="Karlyshev A.V."/>
            <person name="Leather S."/>
            <person name="Moule S."/>
            <person name="Oyston P.C.F."/>
            <person name="Quail M.A."/>
            <person name="Rutherford K.M."/>
            <person name="Simmonds M."/>
            <person name="Skelton J."/>
            <person name="Stevens K."/>
            <person name="Whitehead S."/>
            <person name="Barrell B.G."/>
        </authorList>
    </citation>
    <scope>NUCLEOTIDE SEQUENCE [LARGE SCALE GENOMIC DNA]</scope>
    <source>
        <strain>CO-92 / Biovar Orientalis</strain>
    </source>
</reference>
<reference key="2">
    <citation type="journal article" date="2002" name="J. Bacteriol.">
        <title>Genome sequence of Yersinia pestis KIM.</title>
        <authorList>
            <person name="Deng W."/>
            <person name="Burland V."/>
            <person name="Plunkett G. III"/>
            <person name="Boutin A."/>
            <person name="Mayhew G.F."/>
            <person name="Liss P."/>
            <person name="Perna N.T."/>
            <person name="Rose D.J."/>
            <person name="Mau B."/>
            <person name="Zhou S."/>
            <person name="Schwartz D.C."/>
            <person name="Fetherston J.D."/>
            <person name="Lindler L.E."/>
            <person name="Brubaker R.R."/>
            <person name="Plano G.V."/>
            <person name="Straley S.C."/>
            <person name="McDonough K.A."/>
            <person name="Nilles M.L."/>
            <person name="Matson J.S."/>
            <person name="Blattner F.R."/>
            <person name="Perry R.D."/>
        </authorList>
    </citation>
    <scope>NUCLEOTIDE SEQUENCE [LARGE SCALE GENOMIC DNA]</scope>
    <source>
        <strain>KIM10+ / Biovar Mediaevalis</strain>
    </source>
</reference>
<reference key="3">
    <citation type="journal article" date="2004" name="DNA Res.">
        <title>Complete genome sequence of Yersinia pestis strain 91001, an isolate avirulent to humans.</title>
        <authorList>
            <person name="Song Y."/>
            <person name="Tong Z."/>
            <person name="Wang J."/>
            <person name="Wang L."/>
            <person name="Guo Z."/>
            <person name="Han Y."/>
            <person name="Zhang J."/>
            <person name="Pei D."/>
            <person name="Zhou D."/>
            <person name="Qin H."/>
            <person name="Pang X."/>
            <person name="Han Y."/>
            <person name="Zhai J."/>
            <person name="Li M."/>
            <person name="Cui B."/>
            <person name="Qi Z."/>
            <person name="Jin L."/>
            <person name="Dai R."/>
            <person name="Chen F."/>
            <person name="Li S."/>
            <person name="Ye C."/>
            <person name="Du Z."/>
            <person name="Lin W."/>
            <person name="Wang J."/>
            <person name="Yu J."/>
            <person name="Yang H."/>
            <person name="Wang J."/>
            <person name="Huang P."/>
            <person name="Yang R."/>
        </authorList>
    </citation>
    <scope>NUCLEOTIDE SEQUENCE [LARGE SCALE GENOMIC DNA]</scope>
    <source>
        <strain>91001 / Biovar Mediaevalis</strain>
    </source>
</reference>
<feature type="signal peptide" evidence="2">
    <location>
        <begin position="1"/>
        <end position="25"/>
    </location>
</feature>
<feature type="chain" id="PRO_0000351333" description="Autoinducer 2-binding protein LsrB">
    <location>
        <begin position="26"/>
        <end position="339"/>
    </location>
</feature>
<feature type="strand" evidence="4">
    <location>
        <begin position="28"/>
        <end position="32"/>
    </location>
</feature>
<feature type="strand" evidence="4">
    <location>
        <begin position="34"/>
        <end position="38"/>
    </location>
</feature>
<feature type="helix" evidence="4">
    <location>
        <begin position="39"/>
        <end position="55"/>
    </location>
</feature>
<feature type="strand" evidence="4">
    <location>
        <begin position="58"/>
        <end position="61"/>
    </location>
</feature>
<feature type="helix" evidence="4">
    <location>
        <begin position="69"/>
        <end position="81"/>
    </location>
</feature>
<feature type="strand" evidence="4">
    <location>
        <begin position="85"/>
        <end position="89"/>
    </location>
</feature>
<feature type="strand" evidence="4">
    <location>
        <begin position="92"/>
        <end position="95"/>
    </location>
</feature>
<feature type="helix" evidence="4">
    <location>
        <begin position="98"/>
        <end position="106"/>
    </location>
</feature>
<feature type="strand" evidence="4">
    <location>
        <begin position="110"/>
        <end position="116"/>
    </location>
</feature>
<feature type="helix" evidence="4">
    <location>
        <begin position="120"/>
        <end position="122"/>
    </location>
</feature>
<feature type="strand" evidence="4">
    <location>
        <begin position="124"/>
        <end position="129"/>
    </location>
</feature>
<feature type="helix" evidence="4">
    <location>
        <begin position="132"/>
        <end position="147"/>
    </location>
</feature>
<feature type="strand" evidence="4">
    <location>
        <begin position="150"/>
        <end position="159"/>
    </location>
</feature>
<feature type="helix" evidence="4">
    <location>
        <begin position="164"/>
        <end position="180"/>
    </location>
</feature>
<feature type="strand" evidence="4">
    <location>
        <begin position="184"/>
        <end position="191"/>
    </location>
</feature>
<feature type="helix" evidence="4">
    <location>
        <begin position="196"/>
        <end position="209"/>
    </location>
</feature>
<feature type="strand" evidence="4">
    <location>
        <begin position="215"/>
        <end position="218"/>
    </location>
</feature>
<feature type="helix" evidence="4">
    <location>
        <begin position="223"/>
        <end position="233"/>
    </location>
</feature>
<feature type="strand" evidence="4">
    <location>
        <begin position="240"/>
        <end position="244"/>
    </location>
</feature>
<feature type="helix" evidence="4">
    <location>
        <begin position="247"/>
        <end position="255"/>
    </location>
</feature>
<feature type="strand" evidence="4">
    <location>
        <begin position="262"/>
        <end position="264"/>
    </location>
</feature>
<feature type="helix" evidence="4">
    <location>
        <begin position="267"/>
        <end position="284"/>
    </location>
</feature>
<feature type="strand" evidence="4">
    <location>
        <begin position="292"/>
        <end position="295"/>
    </location>
</feature>
<feature type="turn" evidence="4">
    <location>
        <begin position="296"/>
        <end position="298"/>
    </location>
</feature>
<feature type="strand" evidence="4">
    <location>
        <begin position="299"/>
        <end position="304"/>
    </location>
</feature>
<feature type="helix" evidence="4">
    <location>
        <begin position="306"/>
        <end position="309"/>
    </location>
</feature>
<feature type="strand" evidence="4">
    <location>
        <begin position="319"/>
        <end position="322"/>
    </location>
</feature>
<feature type="strand" evidence="4">
    <location>
        <begin position="327"/>
        <end position="329"/>
    </location>
</feature>
<feature type="turn" evidence="4">
    <location>
        <begin position="331"/>
        <end position="333"/>
    </location>
</feature>
<feature type="helix" evidence="4">
    <location>
        <begin position="334"/>
        <end position="336"/>
    </location>
</feature>
<evidence type="ECO:0000250" key="1"/>
<evidence type="ECO:0000255" key="2"/>
<evidence type="ECO:0000305" key="3"/>
<evidence type="ECO:0007829" key="4">
    <source>
        <dbReference type="PDB" id="3T95"/>
    </source>
</evidence>
<protein>
    <recommendedName>
        <fullName>Autoinducer 2-binding protein LsrB</fullName>
        <shortName>AI-2-binding protein LsrB</shortName>
    </recommendedName>
</protein>
<keyword id="KW-0002">3D-structure</keyword>
<keyword id="KW-0574">Periplasm</keyword>
<keyword id="KW-1185">Reference proteome</keyword>
<keyword id="KW-0732">Signal</keyword>
<comment type="function">
    <text evidence="1">Part of the ABC transporter complex LsrABCD involved in autoinducer 2 (AI-2) import. Binds AI-2 and delivers it to the LsrC and LsrD permeases (By similarity).</text>
</comment>
<comment type="subunit">
    <text evidence="1">The complex is composed of two ATP-binding proteins (LsrA), two transmembrane proteins (LsrC and LsrD) and a solute-binding protein (LsrB).</text>
</comment>
<comment type="subcellular location">
    <subcellularLocation>
        <location evidence="3">Periplasm</location>
    </subcellularLocation>
</comment>
<comment type="similarity">
    <text evidence="3">Belongs to the bacterial solute-binding protein 2 family.</text>
</comment>
<comment type="sequence caution" evidence="3">
    <conflict type="erroneous initiation">
        <sequence resource="EMBL-CDS" id="AAM87317"/>
    </conflict>
</comment>
<dbReference type="EMBL" id="AL590842">
    <property type="protein sequence ID" value="CAL19090.1"/>
    <property type="molecule type" value="Genomic_DNA"/>
</dbReference>
<dbReference type="EMBL" id="AE009952">
    <property type="protein sequence ID" value="AAM87317.1"/>
    <property type="status" value="ALT_INIT"/>
    <property type="molecule type" value="Genomic_DNA"/>
</dbReference>
<dbReference type="EMBL" id="AE017042">
    <property type="protein sequence ID" value="AAS63920.1"/>
    <property type="molecule type" value="Genomic_DNA"/>
</dbReference>
<dbReference type="PIR" id="AH0050">
    <property type="entry name" value="AH0050"/>
</dbReference>
<dbReference type="RefSeq" id="WP_002209189.1">
    <property type="nucleotide sequence ID" value="NZ_WUCM01000002.1"/>
</dbReference>
<dbReference type="RefSeq" id="YP_002345486.1">
    <property type="nucleotide sequence ID" value="NC_003143.1"/>
</dbReference>
<dbReference type="PDB" id="3T95">
    <property type="method" value="X-ray"/>
    <property type="resolution" value="1.75 A"/>
    <property type="chains" value="A=26-339"/>
</dbReference>
<dbReference type="PDBsum" id="3T95"/>
<dbReference type="SMR" id="Q74PW2"/>
<dbReference type="IntAct" id="Q74PW2">
    <property type="interactions" value="1"/>
</dbReference>
<dbReference type="STRING" id="214092.YPO0409"/>
<dbReference type="PaxDb" id="214092-YPO0409"/>
<dbReference type="DNASU" id="1148719"/>
<dbReference type="EnsemblBacteria" id="AAS63920">
    <property type="protein sequence ID" value="AAS63920"/>
    <property type="gene ID" value="YP_3772"/>
</dbReference>
<dbReference type="GeneID" id="57974201"/>
<dbReference type="KEGG" id="ype:YPO0409"/>
<dbReference type="KEGG" id="ypk:y3772"/>
<dbReference type="KEGG" id="ypm:YP_3772"/>
<dbReference type="PATRIC" id="fig|214092.21.peg.649"/>
<dbReference type="eggNOG" id="COG1879">
    <property type="taxonomic scope" value="Bacteria"/>
</dbReference>
<dbReference type="HOGENOM" id="CLU_037628_3_0_6"/>
<dbReference type="OMA" id="KQVNNPY"/>
<dbReference type="OrthoDB" id="9781890at2"/>
<dbReference type="EvolutionaryTrace" id="Q74PW2"/>
<dbReference type="Proteomes" id="UP000000815">
    <property type="component" value="Chromosome"/>
</dbReference>
<dbReference type="Proteomes" id="UP000001019">
    <property type="component" value="Chromosome"/>
</dbReference>
<dbReference type="Proteomes" id="UP000002490">
    <property type="component" value="Chromosome"/>
</dbReference>
<dbReference type="GO" id="GO:0043190">
    <property type="term" value="C:ATP-binding cassette (ABC) transporter complex"/>
    <property type="evidence" value="ECO:0007669"/>
    <property type="project" value="InterPro"/>
</dbReference>
<dbReference type="GO" id="GO:0030288">
    <property type="term" value="C:outer membrane-bounded periplasmic space"/>
    <property type="evidence" value="ECO:0000318"/>
    <property type="project" value="GO_Central"/>
</dbReference>
<dbReference type="GO" id="GO:0030246">
    <property type="term" value="F:carbohydrate binding"/>
    <property type="evidence" value="ECO:0000318"/>
    <property type="project" value="GO_Central"/>
</dbReference>
<dbReference type="CDD" id="cd20003">
    <property type="entry name" value="PBP1_LsrB_Quorum_Sensing"/>
    <property type="match status" value="1"/>
</dbReference>
<dbReference type="Gene3D" id="3.40.50.2300">
    <property type="match status" value="2"/>
</dbReference>
<dbReference type="InterPro" id="IPR050555">
    <property type="entry name" value="Bact_Solute-Bind_Prot2"/>
</dbReference>
<dbReference type="InterPro" id="IPR030159">
    <property type="entry name" value="LsrB"/>
</dbReference>
<dbReference type="InterPro" id="IPR028082">
    <property type="entry name" value="Peripla_BP_I"/>
</dbReference>
<dbReference type="InterPro" id="IPR025997">
    <property type="entry name" value="SBP_2_dom"/>
</dbReference>
<dbReference type="NCBIfam" id="NF011937">
    <property type="entry name" value="PRK15408.1"/>
    <property type="match status" value="1"/>
</dbReference>
<dbReference type="PANTHER" id="PTHR30036:SF7">
    <property type="entry name" value="ABC TRANSPORTER PERIPLASMIC-BINDING PROTEIN YPHF"/>
    <property type="match status" value="1"/>
</dbReference>
<dbReference type="PANTHER" id="PTHR30036">
    <property type="entry name" value="D-XYLOSE-BINDING PERIPLASMIC PROTEIN"/>
    <property type="match status" value="1"/>
</dbReference>
<dbReference type="Pfam" id="PF13407">
    <property type="entry name" value="Peripla_BP_4"/>
    <property type="match status" value="1"/>
</dbReference>
<dbReference type="SUPFAM" id="SSF53822">
    <property type="entry name" value="Periplasmic binding protein-like I"/>
    <property type="match status" value="1"/>
</dbReference>
<organism>
    <name type="scientific">Yersinia pestis</name>
    <dbReference type="NCBI Taxonomy" id="632"/>
    <lineage>
        <taxon>Bacteria</taxon>
        <taxon>Pseudomonadati</taxon>
        <taxon>Pseudomonadota</taxon>
        <taxon>Gammaproteobacteria</taxon>
        <taxon>Enterobacterales</taxon>
        <taxon>Yersiniaceae</taxon>
        <taxon>Yersinia</taxon>
    </lineage>
</organism>
<sequence>MRTQRLKKLALVCALGFACITTAQAAERIAFIPKLVGVGFFTSGGKGAVDAGKALGVDVTYDGPTEPSVSGQVQLINNFVNQGYNAIVVSAVSPDGLCPALKRAMQRGVKILTWDSDTKPECRSVYINQGTPNQLGSMLVDMAANQVKKEQAKVAFFYSSPTVTDQNQWVNEAKKKIQQEHPGWEIVTTQFGYNDATKSLQTAEGILKAYADLDAIIAPDANALPAAAQAAENLKRANVAIVGFSTPNVMRPYVERGTVKEFGLWDVVNQGKISVYVANEMLKKGDLNVGDKIDIPNIGVVEVSPNRVQGYDYEAKGNGIVLLPQRVIFTKENISKYDF</sequence>
<gene>
    <name type="primary">lsrB</name>
    <name type="ordered locus">YPO0409</name>
    <name type="ordered locus">y3772</name>
    <name type="ordered locus">YP_3772</name>
</gene>
<name>LSRB_YERPE</name>
<accession>Q74PW2</accession>
<accession>Q8CZM9</accession>
<proteinExistence type="evidence at protein level"/>